<comment type="function">
    <text evidence="1">Subunit of the oligosaccharyl transferase (OST) complex that catalyzes the initial transfer of a defined glycan (Glc(3)Man(9)GlcNAc(2) in eukaryotes) from the lipid carrier dolichol-pyrophosphate to an asparagine residue within an Asn-X-Ser/Thr consensus motif in nascent polypeptide chains, the first step in protein N-glycosylation. N-glycosylation occurs cotranslationally and the complex associates with the Sec61 complex at the channel-forming translocon complex that mediates protein translocation across the endoplasmic reticulum (ER). All subunits are required for a maximal enzyme activity.</text>
</comment>
<comment type="pathway">
    <text evidence="2">Protein modification; protein glycosylation.</text>
</comment>
<comment type="subunit">
    <text evidence="1">Component of the oligosaccharyltransferase (OST) complex. OST exists in two different complex forms which contain common core subunits RPN1, RPN2, OST48, OST4, DAD1 and TMEM258, either STT3A or STT3B as catalytic subunits, and form-specific accessory subunits. STT3A complex assembly occurs through the formation of 3 subcomplexes. Subcomplex 1 contains RPN1 and TMEM258, subcomplex 2 contains the STT3A-specific subunits STT3A, DC2/OSTC, and KCP2 as well as the core subunit OST4, and subcomplex 3 contains RPN2, DAD1, and OST48. The STT3A complex can form stable complexes with the Sec61 complex or with both the Sec61 and TRAP complexes.</text>
</comment>
<comment type="subcellular location">
    <subcellularLocation>
        <location>Endoplasmic reticulum membrane</location>
        <topology evidence="4">Multi-pass membrane protein</topology>
    </subcellularLocation>
</comment>
<comment type="similarity">
    <text evidence="4">Belongs to the DAD/OST2 family.</text>
</comment>
<feature type="initiator methionine" description="Removed" evidence="2">
    <location>
        <position position="1"/>
    </location>
</feature>
<feature type="chain" id="PRO_0000124012" description="Dolichyl-diphosphooligosaccharide--protein glycosyltransferase subunit DAD1">
    <location>
        <begin position="2"/>
        <end position="113"/>
    </location>
</feature>
<feature type="topological domain" description="Cytoplasmic" evidence="3">
    <location>
        <begin position="2"/>
        <end position="30"/>
    </location>
</feature>
<feature type="transmembrane region" description="Helical" evidence="3">
    <location>
        <begin position="31"/>
        <end position="51"/>
    </location>
</feature>
<feature type="topological domain" description="Lumenal" evidence="3">
    <location>
        <position position="52"/>
    </location>
</feature>
<feature type="transmembrane region" description="Helical" evidence="3">
    <location>
        <begin position="53"/>
        <end position="73"/>
    </location>
</feature>
<feature type="topological domain" description="Cytoplasmic" evidence="3">
    <location>
        <begin position="74"/>
        <end position="92"/>
    </location>
</feature>
<feature type="transmembrane region" description="Helical" evidence="3">
    <location>
        <begin position="93"/>
        <end position="113"/>
    </location>
</feature>
<feature type="modified residue" description="N-acetylserine" evidence="2">
    <location>
        <position position="2"/>
    </location>
</feature>
<accession>Q29036</accession>
<name>DAD1_PIG</name>
<gene>
    <name evidence="2" type="primary">DAD1</name>
</gene>
<reference key="1">
    <citation type="submission" date="1996-07" db="EMBL/GenBank/DDBJ databases">
        <title>Cloning of a pig cDNA encoding the DAD1 (defender against apoptotic cell death) protein.</title>
        <authorList>
            <person name="Suzuki H."/>
            <person name="Hamasima N."/>
            <person name="Kimura M."/>
            <person name="Yasue H."/>
        </authorList>
    </citation>
    <scope>NUCLEOTIDE SEQUENCE [MRNA]</scope>
    <source>
        <tissue>Adipose tissue</tissue>
    </source>
</reference>
<keyword id="KW-0007">Acetylation</keyword>
<keyword id="KW-0053">Apoptosis</keyword>
<keyword id="KW-0256">Endoplasmic reticulum</keyword>
<keyword id="KW-0472">Membrane</keyword>
<keyword id="KW-1185">Reference proteome</keyword>
<keyword id="KW-0812">Transmembrane</keyword>
<keyword id="KW-1133">Transmembrane helix</keyword>
<dbReference type="EMBL" id="D86562">
    <property type="protein sequence ID" value="BAA13115.1"/>
    <property type="molecule type" value="mRNA"/>
</dbReference>
<dbReference type="RefSeq" id="NP_999109.1">
    <property type="nucleotide sequence ID" value="NM_213944.1"/>
</dbReference>
<dbReference type="SMR" id="Q29036"/>
<dbReference type="FunCoup" id="Q29036">
    <property type="interactions" value="1773"/>
</dbReference>
<dbReference type="STRING" id="9823.ENSSSCP00000072238"/>
<dbReference type="PaxDb" id="9823-ENSSSCP00000002240"/>
<dbReference type="PeptideAtlas" id="Q29036"/>
<dbReference type="Ensembl" id="ENSSSCT00000067287.1">
    <property type="protein sequence ID" value="ENSSSCP00000072238.1"/>
    <property type="gene ID" value="ENSSSCG00000002050.5"/>
</dbReference>
<dbReference type="Ensembl" id="ENSSSCT00015049239.1">
    <property type="protein sequence ID" value="ENSSSCP00015019618.1"/>
    <property type="gene ID" value="ENSSSCG00015036904.1"/>
</dbReference>
<dbReference type="Ensembl" id="ENSSSCT00025099683.1">
    <property type="protein sequence ID" value="ENSSSCP00025043919.1"/>
    <property type="gene ID" value="ENSSSCG00025072437.1"/>
</dbReference>
<dbReference type="Ensembl" id="ENSSSCT00030099334.1">
    <property type="protein sequence ID" value="ENSSSCP00030045715.1"/>
    <property type="gene ID" value="ENSSSCG00030071016.1"/>
</dbReference>
<dbReference type="Ensembl" id="ENSSSCT00035078124.1">
    <property type="protein sequence ID" value="ENSSSCP00035032003.1"/>
    <property type="gene ID" value="ENSSSCG00035058368.1"/>
</dbReference>
<dbReference type="Ensembl" id="ENSSSCT00040051286.1">
    <property type="protein sequence ID" value="ENSSSCP00040021290.1"/>
    <property type="gene ID" value="ENSSSCG00040038294.1"/>
</dbReference>
<dbReference type="Ensembl" id="ENSSSCT00040051391.1">
    <property type="protein sequence ID" value="ENSSSCP00040021327.1"/>
    <property type="gene ID" value="ENSSSCG00040038294.1"/>
</dbReference>
<dbReference type="Ensembl" id="ENSSSCT00045020152.1">
    <property type="protein sequence ID" value="ENSSSCP00045013835.1"/>
    <property type="gene ID" value="ENSSSCG00045011856.1"/>
</dbReference>
<dbReference type="Ensembl" id="ENSSSCT00050063533.1">
    <property type="protein sequence ID" value="ENSSSCP00050027287.1"/>
    <property type="gene ID" value="ENSSSCG00050046689.1"/>
</dbReference>
<dbReference type="Ensembl" id="ENSSSCT00055012087.1">
    <property type="protein sequence ID" value="ENSSSCP00055009551.1"/>
    <property type="gene ID" value="ENSSSCG00055006184.1"/>
</dbReference>
<dbReference type="Ensembl" id="ENSSSCT00060059292.1">
    <property type="protein sequence ID" value="ENSSSCP00060025407.1"/>
    <property type="gene ID" value="ENSSSCG00060043714.1"/>
</dbReference>
<dbReference type="Ensembl" id="ENSSSCT00065026373.1">
    <property type="protein sequence ID" value="ENSSSCP00065010856.1"/>
    <property type="gene ID" value="ENSSSCG00065019770.1"/>
</dbReference>
<dbReference type="Ensembl" id="ENSSSCT00070041853.1">
    <property type="protein sequence ID" value="ENSSSCP00070035149.1"/>
    <property type="gene ID" value="ENSSSCG00070021065.1"/>
</dbReference>
<dbReference type="Ensembl" id="ENSSSCT00085013319">
    <property type="protein sequence ID" value="ENSSSCP00085009728"/>
    <property type="gene ID" value="ENSSSCG00085006982"/>
</dbReference>
<dbReference type="Ensembl" id="ENSSSCT00090049447">
    <property type="protein sequence ID" value="ENSSSCP00090030624"/>
    <property type="gene ID" value="ENSSSCG00090027991"/>
</dbReference>
<dbReference type="Ensembl" id="ENSSSCT00105043598">
    <property type="protein sequence ID" value="ENSSSCP00105030393"/>
    <property type="gene ID" value="ENSSSCG00105022931"/>
</dbReference>
<dbReference type="Ensembl" id="ENSSSCT00110040955">
    <property type="protein sequence ID" value="ENSSSCP00110028637"/>
    <property type="gene ID" value="ENSSSCG00110021201"/>
</dbReference>
<dbReference type="Ensembl" id="ENSSSCT00115013998">
    <property type="protein sequence ID" value="ENSSSCP00115013217"/>
    <property type="gene ID" value="ENSSSCG00115008016"/>
</dbReference>
<dbReference type="Ensembl" id="ENSSSCT00130036825">
    <property type="protein sequence ID" value="ENSSSCP00130025638"/>
    <property type="gene ID" value="ENSSSCG00130012591"/>
</dbReference>
<dbReference type="GeneID" id="396984"/>
<dbReference type="KEGG" id="ssc:396984"/>
<dbReference type="CTD" id="1603"/>
<dbReference type="VGNC" id="VGNC:87150">
    <property type="gene designation" value="DAD1"/>
</dbReference>
<dbReference type="eggNOG" id="KOG1746">
    <property type="taxonomic scope" value="Eukaryota"/>
</dbReference>
<dbReference type="GeneTree" id="ENSGT00390000003324"/>
<dbReference type="HOGENOM" id="CLU_111220_2_1_1"/>
<dbReference type="InParanoid" id="Q29036"/>
<dbReference type="OMA" id="HIILHIV"/>
<dbReference type="OrthoDB" id="445566at2759"/>
<dbReference type="TreeFam" id="TF312846"/>
<dbReference type="UniPathway" id="UPA00378"/>
<dbReference type="Proteomes" id="UP000008227">
    <property type="component" value="Chromosome 7"/>
</dbReference>
<dbReference type="Proteomes" id="UP000314985">
    <property type="component" value="Chromosome 7"/>
</dbReference>
<dbReference type="Proteomes" id="UP000694570">
    <property type="component" value="Unplaced"/>
</dbReference>
<dbReference type="Proteomes" id="UP000694571">
    <property type="component" value="Unplaced"/>
</dbReference>
<dbReference type="Proteomes" id="UP000694720">
    <property type="component" value="Unplaced"/>
</dbReference>
<dbReference type="Proteomes" id="UP000694722">
    <property type="component" value="Unplaced"/>
</dbReference>
<dbReference type="Proteomes" id="UP000694723">
    <property type="component" value="Unplaced"/>
</dbReference>
<dbReference type="Proteomes" id="UP000694724">
    <property type="component" value="Unplaced"/>
</dbReference>
<dbReference type="Proteomes" id="UP000694725">
    <property type="component" value="Unplaced"/>
</dbReference>
<dbReference type="Proteomes" id="UP000694726">
    <property type="component" value="Unplaced"/>
</dbReference>
<dbReference type="Proteomes" id="UP000694727">
    <property type="component" value="Unplaced"/>
</dbReference>
<dbReference type="Proteomes" id="UP000694728">
    <property type="component" value="Unplaced"/>
</dbReference>
<dbReference type="Bgee" id="ENSSSCG00000002050">
    <property type="expression patterns" value="Expressed in right lobe of liver and 43 other cell types or tissues"/>
</dbReference>
<dbReference type="ExpressionAtlas" id="Q29036">
    <property type="expression patterns" value="baseline and differential"/>
</dbReference>
<dbReference type="GO" id="GO:0008250">
    <property type="term" value="C:oligosaccharyltransferase complex"/>
    <property type="evidence" value="ECO:0000250"/>
    <property type="project" value="UniProtKB"/>
</dbReference>
<dbReference type="GO" id="GO:0160226">
    <property type="term" value="C:oligosaccharyltransferase complex A"/>
    <property type="evidence" value="ECO:0007669"/>
    <property type="project" value="Ensembl"/>
</dbReference>
<dbReference type="GO" id="GO:0160227">
    <property type="term" value="C:oligosaccharyltransferase complex B"/>
    <property type="evidence" value="ECO:0007669"/>
    <property type="project" value="Ensembl"/>
</dbReference>
<dbReference type="GO" id="GO:0008047">
    <property type="term" value="F:enzyme activator activity"/>
    <property type="evidence" value="ECO:0007669"/>
    <property type="project" value="Ensembl"/>
</dbReference>
<dbReference type="GO" id="GO:0006915">
    <property type="term" value="P:apoptotic process"/>
    <property type="evidence" value="ECO:0007669"/>
    <property type="project" value="UniProtKB-KW"/>
</dbReference>
<dbReference type="GO" id="GO:0001824">
    <property type="term" value="P:blastocyst development"/>
    <property type="evidence" value="ECO:0007669"/>
    <property type="project" value="Ensembl"/>
</dbReference>
<dbReference type="GO" id="GO:0043066">
    <property type="term" value="P:negative regulation of apoptotic process"/>
    <property type="evidence" value="ECO:0007669"/>
    <property type="project" value="Ensembl"/>
</dbReference>
<dbReference type="GO" id="GO:0006486">
    <property type="term" value="P:protein glycosylation"/>
    <property type="evidence" value="ECO:0000250"/>
    <property type="project" value="UniProtKB"/>
</dbReference>
<dbReference type="GO" id="GO:0006487">
    <property type="term" value="P:protein N-linked glycosylation"/>
    <property type="evidence" value="ECO:0000318"/>
    <property type="project" value="GO_Central"/>
</dbReference>
<dbReference type="GO" id="GO:0018279">
    <property type="term" value="P:protein N-linked glycosylation via asparagine"/>
    <property type="evidence" value="ECO:0007669"/>
    <property type="project" value="Ensembl"/>
</dbReference>
<dbReference type="GO" id="GO:0031647">
    <property type="term" value="P:regulation of protein stability"/>
    <property type="evidence" value="ECO:0007669"/>
    <property type="project" value="Ensembl"/>
</dbReference>
<dbReference type="InterPro" id="IPR003038">
    <property type="entry name" value="DAD/Ost2"/>
</dbReference>
<dbReference type="PANTHER" id="PTHR10705">
    <property type="entry name" value="DOLICHYL-DIPHOSPHOOLIGOSACCHARIDE--PROTEIN GLYCOSYLTRANSFERASE SUBUNIT DAD1"/>
    <property type="match status" value="1"/>
</dbReference>
<dbReference type="PANTHER" id="PTHR10705:SF0">
    <property type="entry name" value="DOLICHYL-DIPHOSPHOOLIGOSACCHARIDE--PROTEIN GLYCOSYLTRANSFERASE SUBUNIT DAD1"/>
    <property type="match status" value="1"/>
</dbReference>
<dbReference type="Pfam" id="PF02109">
    <property type="entry name" value="DAD"/>
    <property type="match status" value="1"/>
</dbReference>
<dbReference type="PIRSF" id="PIRSF005588">
    <property type="entry name" value="DAD"/>
    <property type="match status" value="1"/>
</dbReference>
<protein>
    <recommendedName>
        <fullName evidence="2">Dolichyl-diphosphooligosaccharide--protein glycosyltransferase subunit DAD1</fullName>
        <shortName>Oligosaccharyl transferase subunit DAD1</shortName>
    </recommendedName>
    <alternativeName>
        <fullName>Defender against cell death 1</fullName>
        <shortName>DAD-1</shortName>
    </alternativeName>
</protein>
<proteinExistence type="inferred from homology"/>
<evidence type="ECO:0000250" key="1">
    <source>
        <dbReference type="UniProtKB" id="E2R4X3"/>
    </source>
</evidence>
<evidence type="ECO:0000250" key="2">
    <source>
        <dbReference type="UniProtKB" id="P61803"/>
    </source>
</evidence>
<evidence type="ECO:0000255" key="3"/>
<evidence type="ECO:0000305" key="4"/>
<sequence length="113" mass="12511">MSASVLSVISRFLEEYLSSTPQRLKLLDAYLLYILLTGALQFGYCLLVGTFPFNSFLSGFISCVGSFILAVCLRIQINPQNKADFQGISPERAFADFLFASTILHLVVMNFVG</sequence>
<organism>
    <name type="scientific">Sus scrofa</name>
    <name type="common">Pig</name>
    <dbReference type="NCBI Taxonomy" id="9823"/>
    <lineage>
        <taxon>Eukaryota</taxon>
        <taxon>Metazoa</taxon>
        <taxon>Chordata</taxon>
        <taxon>Craniata</taxon>
        <taxon>Vertebrata</taxon>
        <taxon>Euteleostomi</taxon>
        <taxon>Mammalia</taxon>
        <taxon>Eutheria</taxon>
        <taxon>Laurasiatheria</taxon>
        <taxon>Artiodactyla</taxon>
        <taxon>Suina</taxon>
        <taxon>Suidae</taxon>
        <taxon>Sus</taxon>
    </lineage>
</organism>